<keyword id="KW-0378">Hydrolase</keyword>
<keyword id="KW-0479">Metal-binding</keyword>
<keyword id="KW-0482">Metalloprotease</keyword>
<keyword id="KW-0496">Mitochondrion</keyword>
<keyword id="KW-0645">Protease</keyword>
<keyword id="KW-0809">Transit peptide</keyword>
<keyword id="KW-0862">Zinc</keyword>
<comment type="function">
    <text evidence="1 2">Catalytic subunit of the essential mitochondrial processing protease (MPP), which cleaves the mitochondrial sequence off newly imported precursors proteins (By similarity). Preferentially, cleaves after an arginine at position P2 (By similarity).</text>
</comment>
<comment type="catalytic activity">
    <reaction evidence="1">
        <text>Release of N-terminal transit peptides from precursor proteins imported into the mitochondrion, typically with Arg in position P2.</text>
        <dbReference type="EC" id="3.4.24.64"/>
    </reaction>
</comment>
<comment type="cofactor">
    <cofactor evidence="1">
        <name>Zn(2+)</name>
        <dbReference type="ChEBI" id="CHEBI:29105"/>
    </cofactor>
    <text evidence="1">Binds 1 zinc ion per subunit.</text>
</comment>
<comment type="activity regulation">
    <text evidence="1">Binding to mppA is required for catalytic activity.</text>
</comment>
<comment type="subunit">
    <text evidence="1">Heterodimer of mppA (alpha) and mppB (beta) subunits, forming the mitochondrial processing protease (MPP) in which mppA is involved in substrate recognition and binding and mppB is the catalytic subunit.</text>
</comment>
<comment type="subcellular location">
    <subcellularLocation>
        <location evidence="1">Mitochondrion matrix</location>
    </subcellularLocation>
</comment>
<comment type="similarity">
    <text evidence="5">Belongs to the peptidase M16 family.</text>
</comment>
<accession>Q9Y8B5</accession>
<sequence length="466" mass="51163">MLGRVLKSAARSQRGLRSFATTTNLGPFTEISTLSNGLTVATESQPHAQTATVGVWIDAGSRAETDKTNGTAHFLEHMAFKGTGRRSQHALELEVENIGAHLNAYTSREQTVYYAKSFSKDVPVAVDIISDILQNSKLESGAIERERDVILREQQEVDKQLEEVVFDHLHAVAFQGQPLGRTILGPKNNILSIQRDDLASYIQTNYTADRMVLVGTGGVDHQSLVKLAEKHFSSLPVSANPLALGRLSSERKPTFVGSEARIRDDELPTAHVAIAVEGVGWSSPDYFPMMVMQSIFGNWDRSLGASSLLSSRLSHIISSNSLANSFMSFSTSYSDTGLWGIYLVSENLMNLDDTLHFTLKEWTRMSIAPTEGEVERAKSQLKAGLLLSLDGTTAVAEDIGRQIVTSGKRMTPAQIENAVDAVSVDDIKRVAQKYLWDKDFALAAFGNIDGLKDYGRIRNDMSSMLY</sequence>
<protein>
    <recommendedName>
        <fullName>Mitochondrial-processing peptidase subunit beta</fullName>
        <ecNumber evidence="1">3.4.24.64</ecNumber>
    </recommendedName>
    <alternativeName>
        <fullName>Beta-MPP</fullName>
    </alternativeName>
</protein>
<name>MPPB_LENED</name>
<gene>
    <name type="primary">mppB</name>
</gene>
<organism>
    <name type="scientific">Lentinula edodes</name>
    <name type="common">Shiitake mushroom</name>
    <name type="synonym">Lentinus edodes</name>
    <dbReference type="NCBI Taxonomy" id="5353"/>
    <lineage>
        <taxon>Eukaryota</taxon>
        <taxon>Fungi</taxon>
        <taxon>Dikarya</taxon>
        <taxon>Basidiomycota</taxon>
        <taxon>Agaricomycotina</taxon>
        <taxon>Agaricomycetes</taxon>
        <taxon>Agaricomycetidae</taxon>
        <taxon>Agaricales</taxon>
        <taxon>Marasmiineae</taxon>
        <taxon>Omphalotaceae</taxon>
        <taxon>Lentinula</taxon>
    </lineage>
</organism>
<reference key="1">
    <citation type="journal article" date="1998" name="Gene">
        <title>Cloning and characterization of the gene encoding beta subunit of mitochondrial processing peptidase from the basidiomycete Lentinula edodes.</title>
        <authorList>
            <person name="Zhang M."/>
            <person name="Xie W."/>
            <person name="Leung G.S."/>
            <person name="Deane E.E."/>
            <person name="Kwan H.S."/>
        </authorList>
    </citation>
    <scope>NUCLEOTIDE SEQUENCE [GENOMIC DNA]</scope>
</reference>
<proteinExistence type="inferred from homology"/>
<evidence type="ECO:0000250" key="1">
    <source>
        <dbReference type="UniProtKB" id="P10507"/>
    </source>
</evidence>
<evidence type="ECO:0000250" key="2">
    <source>
        <dbReference type="UniProtKB" id="Q03346"/>
    </source>
</evidence>
<evidence type="ECO:0000255" key="3"/>
<evidence type="ECO:0000255" key="4">
    <source>
        <dbReference type="PROSITE-ProRule" id="PRU10096"/>
    </source>
</evidence>
<evidence type="ECO:0000305" key="5"/>
<feature type="transit peptide" description="Mitochondrion" evidence="3">
    <location>
        <begin position="1"/>
        <end status="unknown"/>
    </location>
</feature>
<feature type="chain" id="PRO_0000026781" description="Mitochondrial-processing peptidase subunit beta">
    <location>
        <begin status="unknown"/>
        <end position="466"/>
    </location>
</feature>
<feature type="active site" description="Proton acceptor" evidence="4">
    <location>
        <position position="76"/>
    </location>
</feature>
<feature type="binding site" evidence="4">
    <location>
        <position position="73"/>
    </location>
    <ligand>
        <name>Zn(2+)</name>
        <dbReference type="ChEBI" id="CHEBI:29105"/>
    </ligand>
</feature>
<feature type="binding site" evidence="4">
    <location>
        <position position="77"/>
    </location>
    <ligand>
        <name>Zn(2+)</name>
        <dbReference type="ChEBI" id="CHEBI:29105"/>
    </ligand>
</feature>
<feature type="binding site" evidence="4">
    <location>
        <position position="153"/>
    </location>
    <ligand>
        <name>Zn(2+)</name>
        <dbReference type="ChEBI" id="CHEBI:29105"/>
    </ligand>
</feature>
<dbReference type="EC" id="3.4.24.64" evidence="1"/>
<dbReference type="EMBL" id="AF146393">
    <property type="protein sequence ID" value="AAD37722.1"/>
    <property type="molecule type" value="Genomic_DNA"/>
</dbReference>
<dbReference type="PIR" id="JC6525">
    <property type="entry name" value="JC6525"/>
</dbReference>
<dbReference type="SMR" id="Q9Y8B5"/>
<dbReference type="MEROPS" id="M16.003"/>
<dbReference type="OrthoDB" id="10251424at2759"/>
<dbReference type="GO" id="GO:0005759">
    <property type="term" value="C:mitochondrial matrix"/>
    <property type="evidence" value="ECO:0007669"/>
    <property type="project" value="UniProtKB-SubCell"/>
</dbReference>
<dbReference type="GO" id="GO:0046872">
    <property type="term" value="F:metal ion binding"/>
    <property type="evidence" value="ECO:0007669"/>
    <property type="project" value="UniProtKB-KW"/>
</dbReference>
<dbReference type="GO" id="GO:0004222">
    <property type="term" value="F:metalloendopeptidase activity"/>
    <property type="evidence" value="ECO:0007669"/>
    <property type="project" value="UniProtKB-EC"/>
</dbReference>
<dbReference type="GO" id="GO:0006627">
    <property type="term" value="P:protein processing involved in protein targeting to mitochondrion"/>
    <property type="evidence" value="ECO:0007669"/>
    <property type="project" value="TreeGrafter"/>
</dbReference>
<dbReference type="FunFam" id="3.30.830.10:FF:000002">
    <property type="entry name" value="Mitochondrial-processing peptidase subunit beta"/>
    <property type="match status" value="1"/>
</dbReference>
<dbReference type="FunFam" id="3.30.830.10:FF:000001">
    <property type="entry name" value="Mitochondrial-processing peptidase subunit beta, mitochondrial"/>
    <property type="match status" value="1"/>
</dbReference>
<dbReference type="Gene3D" id="3.30.830.10">
    <property type="entry name" value="Metalloenzyme, LuxS/M16 peptidase-like"/>
    <property type="match status" value="2"/>
</dbReference>
<dbReference type="InterPro" id="IPR011249">
    <property type="entry name" value="Metalloenz_LuxS/M16"/>
</dbReference>
<dbReference type="InterPro" id="IPR050361">
    <property type="entry name" value="MPP/UQCRC_Complex"/>
</dbReference>
<dbReference type="InterPro" id="IPR011765">
    <property type="entry name" value="Pept_M16_N"/>
</dbReference>
<dbReference type="InterPro" id="IPR001431">
    <property type="entry name" value="Pept_M16_Zn_BS"/>
</dbReference>
<dbReference type="InterPro" id="IPR007863">
    <property type="entry name" value="Peptidase_M16_C"/>
</dbReference>
<dbReference type="PANTHER" id="PTHR11851:SF149">
    <property type="entry name" value="GH01077P"/>
    <property type="match status" value="1"/>
</dbReference>
<dbReference type="PANTHER" id="PTHR11851">
    <property type="entry name" value="METALLOPROTEASE"/>
    <property type="match status" value="1"/>
</dbReference>
<dbReference type="Pfam" id="PF00675">
    <property type="entry name" value="Peptidase_M16"/>
    <property type="match status" value="1"/>
</dbReference>
<dbReference type="Pfam" id="PF05193">
    <property type="entry name" value="Peptidase_M16_C"/>
    <property type="match status" value="1"/>
</dbReference>
<dbReference type="SUPFAM" id="SSF63411">
    <property type="entry name" value="LuxS/MPP-like metallohydrolase"/>
    <property type="match status" value="2"/>
</dbReference>
<dbReference type="PROSITE" id="PS00143">
    <property type="entry name" value="INSULINASE"/>
    <property type="match status" value="1"/>
</dbReference>